<feature type="chain" id="PRO_0000128700" description="Uncharacterized protein HP_1531">
    <location>
        <begin position="1"/>
        <end position="79"/>
    </location>
</feature>
<feature type="helix" evidence="1">
    <location>
        <begin position="2"/>
        <end position="26"/>
    </location>
</feature>
<feature type="helix" evidence="1">
    <location>
        <begin position="30"/>
        <end position="37"/>
    </location>
</feature>
<feature type="helix" evidence="1">
    <location>
        <begin position="49"/>
        <end position="51"/>
    </location>
</feature>
<feature type="helix" evidence="1">
    <location>
        <begin position="52"/>
        <end position="73"/>
    </location>
</feature>
<feature type="helix" evidence="1">
    <location>
        <begin position="74"/>
        <end position="76"/>
    </location>
</feature>
<gene>
    <name type="ordered locus">HP_1531</name>
</gene>
<proteinExistence type="evidence at protein level"/>
<protein>
    <recommendedName>
        <fullName>Uncharacterized protein HP_1531</fullName>
    </recommendedName>
</protein>
<reference key="1">
    <citation type="journal article" date="1997" name="Nature">
        <title>The complete genome sequence of the gastric pathogen Helicobacter pylori.</title>
        <authorList>
            <person name="Tomb J.-F."/>
            <person name="White O."/>
            <person name="Kerlavage A.R."/>
            <person name="Clayton R.A."/>
            <person name="Sutton G.G."/>
            <person name="Fleischmann R.D."/>
            <person name="Ketchum K.A."/>
            <person name="Klenk H.-P."/>
            <person name="Gill S.R."/>
            <person name="Dougherty B.A."/>
            <person name="Nelson K.E."/>
            <person name="Quackenbush J."/>
            <person name="Zhou L."/>
            <person name="Kirkness E.F."/>
            <person name="Peterson S.N."/>
            <person name="Loftus B.J."/>
            <person name="Richardson D.L."/>
            <person name="Dodson R.J."/>
            <person name="Khalak H.G."/>
            <person name="Glodek A."/>
            <person name="McKenney K."/>
            <person name="FitzGerald L.M."/>
            <person name="Lee N."/>
            <person name="Adams M.D."/>
            <person name="Hickey E.K."/>
            <person name="Berg D.E."/>
            <person name="Gocayne J.D."/>
            <person name="Utterback T.R."/>
            <person name="Peterson J.D."/>
            <person name="Kelley J.M."/>
            <person name="Cotton M.D."/>
            <person name="Weidman J.F."/>
            <person name="Fujii C."/>
            <person name="Bowman C."/>
            <person name="Watthey L."/>
            <person name="Wallin E."/>
            <person name="Hayes W.S."/>
            <person name="Borodovsky M."/>
            <person name="Karp P.D."/>
            <person name="Smith H.O."/>
            <person name="Fraser C.M."/>
            <person name="Venter J.C."/>
        </authorList>
    </citation>
    <scope>NUCLEOTIDE SEQUENCE [LARGE SCALE GENOMIC DNA]</scope>
    <source>
        <strain>ATCC 700392 / 26695</strain>
    </source>
</reference>
<organism>
    <name type="scientific">Helicobacter pylori (strain ATCC 700392 / 26695)</name>
    <name type="common">Campylobacter pylori</name>
    <dbReference type="NCBI Taxonomy" id="85962"/>
    <lineage>
        <taxon>Bacteria</taxon>
        <taxon>Pseudomonadati</taxon>
        <taxon>Campylobacterota</taxon>
        <taxon>Epsilonproteobacteria</taxon>
        <taxon>Campylobacterales</taxon>
        <taxon>Helicobacteraceae</taxon>
        <taxon>Helicobacter</taxon>
    </lineage>
</organism>
<sequence>MFEKIRKILADIEDSQNEIEMLLKLANLSLGDFIEIKRGSMDMPKGVNEAFFTQLSEEVERLKELINALNKIKKGLLVF</sequence>
<keyword id="KW-0002">3D-structure</keyword>
<keyword id="KW-1185">Reference proteome</keyword>
<accession>P64665</accession>
<accession>O26059</accession>
<dbReference type="EMBL" id="AE000511">
    <property type="protein sequence ID" value="AAD08575.1"/>
    <property type="molecule type" value="Genomic_DNA"/>
</dbReference>
<dbReference type="PIR" id="C64711">
    <property type="entry name" value="C64711"/>
</dbReference>
<dbReference type="RefSeq" id="NP_208321.1">
    <property type="nucleotide sequence ID" value="NC_000915.1"/>
</dbReference>
<dbReference type="RefSeq" id="WP_000461837.1">
    <property type="nucleotide sequence ID" value="NC_018939.1"/>
</dbReference>
<dbReference type="PDB" id="1ZKE">
    <property type="method" value="X-ray"/>
    <property type="resolution" value="1.60 A"/>
    <property type="chains" value="A/B/C/D/E/F=1-79"/>
</dbReference>
<dbReference type="PDBsum" id="1ZKE"/>
<dbReference type="SMR" id="P64665"/>
<dbReference type="STRING" id="85962.HP_1531"/>
<dbReference type="PaxDb" id="85962-C694_07930"/>
<dbReference type="EnsemblBacteria" id="AAD08575">
    <property type="protein sequence ID" value="AAD08575"/>
    <property type="gene ID" value="HP_1531"/>
</dbReference>
<dbReference type="KEGG" id="heo:C694_07930"/>
<dbReference type="KEGG" id="hpy:HP_1531"/>
<dbReference type="PATRIC" id="fig|85962.47.peg.1646"/>
<dbReference type="InParanoid" id="P64665"/>
<dbReference type="OrthoDB" id="5329258at2"/>
<dbReference type="EvolutionaryTrace" id="P64665"/>
<dbReference type="Proteomes" id="UP000000429">
    <property type="component" value="Chromosome"/>
</dbReference>
<dbReference type="Gene3D" id="1.20.58.90">
    <property type="match status" value="1"/>
</dbReference>
<dbReference type="InterPro" id="IPR019469">
    <property type="entry name" value="DUF2443"/>
</dbReference>
<dbReference type="InterPro" id="IPR038018">
    <property type="entry name" value="HP_1531"/>
</dbReference>
<dbReference type="Pfam" id="PF10398">
    <property type="entry name" value="DUF2443"/>
    <property type="match status" value="1"/>
</dbReference>
<dbReference type="SUPFAM" id="SSF140496">
    <property type="entry name" value="HP1531-like"/>
    <property type="match status" value="1"/>
</dbReference>
<name>Y1531_HELPY</name>
<evidence type="ECO:0007829" key="1">
    <source>
        <dbReference type="PDB" id="1ZKE"/>
    </source>
</evidence>